<comment type="function">
    <text evidence="1">Catalyzes the NADPH-dependent reduction of glutamyl-tRNA(Glu) to glutamate 1-semialdehyde (GSA).</text>
</comment>
<comment type="catalytic activity">
    <reaction evidence="1">
        <text>(S)-4-amino-5-oxopentanoate + tRNA(Glu) + NADP(+) = L-glutamyl-tRNA(Glu) + NADPH + H(+)</text>
        <dbReference type="Rhea" id="RHEA:12344"/>
        <dbReference type="Rhea" id="RHEA-COMP:9663"/>
        <dbReference type="Rhea" id="RHEA-COMP:9680"/>
        <dbReference type="ChEBI" id="CHEBI:15378"/>
        <dbReference type="ChEBI" id="CHEBI:57501"/>
        <dbReference type="ChEBI" id="CHEBI:57783"/>
        <dbReference type="ChEBI" id="CHEBI:58349"/>
        <dbReference type="ChEBI" id="CHEBI:78442"/>
        <dbReference type="ChEBI" id="CHEBI:78520"/>
        <dbReference type="EC" id="1.2.1.70"/>
    </reaction>
</comment>
<comment type="pathway">
    <text evidence="1">Porphyrin-containing compound metabolism; protoporphyrin-IX biosynthesis; 5-aminolevulinate from L-glutamyl-tRNA(Glu): step 1/2.</text>
</comment>
<comment type="subunit">
    <text evidence="1">Homodimer.</text>
</comment>
<comment type="domain">
    <text evidence="1">Possesses an unusual extended V-shaped dimeric structure with each monomer consisting of three distinct domains arranged along a curved 'spinal' alpha-helix. The N-terminal catalytic domain specifically recognizes the glutamate moiety of the substrate. The second domain is the NADPH-binding domain, and the third C-terminal domain is responsible for dimerization.</text>
</comment>
<comment type="miscellaneous">
    <text evidence="1">During catalysis, the active site Cys acts as a nucleophile attacking the alpha-carbonyl group of tRNA-bound glutamate with the formation of a thioester intermediate between enzyme and glutamate, and the concomitant release of tRNA(Glu). The thioester intermediate is finally reduced by direct hydride transfer from NADPH, to form the product GSA.</text>
</comment>
<comment type="similarity">
    <text evidence="1">Belongs to the glutamyl-tRNA reductase family.</text>
</comment>
<evidence type="ECO:0000255" key="1">
    <source>
        <dbReference type="HAMAP-Rule" id="MF_00087"/>
    </source>
</evidence>
<sequence length="449" mass="51850">MELETHLSKYFTLAFTHKSMSLEMREKLAINSSTTLKEFLQTIKTHCPNIKECMVLSTCNRFEIYASLKHGANTNEQKNALLKILAQNKKMSVSDLEKCVLMNTDESAVHHVFSVCSSLDSLVVGETQITGQMKNAYKFAFEEKFCSKDLTRLLHFAFKCAAKVRNLTGISKQGVSISSVAVKEALNIFEKERIKDKKALVIGLGEMAQLVIKHLLNKQFEVLILGRNAAKFEDFVKELEEPKKVSFQNIENLNAYINEYELLFCATSSPHFIVQNRMLKETIFRRFWFDLAVPRNIEKPVLDNIFLYSVDDLEPMVRENVENRQESRTKAYEIVGLATMEFYQWIQSLEVEPVIKDLRELARISAQKELQKALKKRYVPKEYESNIEKILHNAFNTFLHHPTIALKKNAQKEESDVLVGAIKNLFNLDKSTTCHAQNLNLYKCEYYEE</sequence>
<proteinExistence type="inferred from homology"/>
<reference key="1">
    <citation type="submission" date="2008-10" db="EMBL/GenBank/DDBJ databases">
        <title>The complete genome sequence of Helicobacter pylori strain P12.</title>
        <authorList>
            <person name="Fischer W."/>
            <person name="Windhager L."/>
            <person name="Karnholz A."/>
            <person name="Zeiller M."/>
            <person name="Zimmer R."/>
            <person name="Haas R."/>
        </authorList>
    </citation>
    <scope>NUCLEOTIDE SEQUENCE [LARGE SCALE GENOMIC DNA]</scope>
    <source>
        <strain>P12</strain>
    </source>
</reference>
<dbReference type="EC" id="1.2.1.70" evidence="1"/>
<dbReference type="EMBL" id="CP001217">
    <property type="protein sequence ID" value="ACJ07398.1"/>
    <property type="molecule type" value="Genomic_DNA"/>
</dbReference>
<dbReference type="SMR" id="B6JKH0"/>
<dbReference type="KEGG" id="hpp:HPP12_0239"/>
<dbReference type="HOGENOM" id="CLU_035113_2_2_7"/>
<dbReference type="UniPathway" id="UPA00251">
    <property type="reaction ID" value="UER00316"/>
</dbReference>
<dbReference type="Proteomes" id="UP000008198">
    <property type="component" value="Chromosome"/>
</dbReference>
<dbReference type="GO" id="GO:0008883">
    <property type="term" value="F:glutamyl-tRNA reductase activity"/>
    <property type="evidence" value="ECO:0007669"/>
    <property type="project" value="UniProtKB-UniRule"/>
</dbReference>
<dbReference type="GO" id="GO:0050661">
    <property type="term" value="F:NADP binding"/>
    <property type="evidence" value="ECO:0007669"/>
    <property type="project" value="InterPro"/>
</dbReference>
<dbReference type="GO" id="GO:0006782">
    <property type="term" value="P:protoporphyrinogen IX biosynthetic process"/>
    <property type="evidence" value="ECO:0007669"/>
    <property type="project" value="UniProtKB-UniRule"/>
</dbReference>
<dbReference type="CDD" id="cd05213">
    <property type="entry name" value="NAD_bind_Glutamyl_tRNA_reduct"/>
    <property type="match status" value="1"/>
</dbReference>
<dbReference type="FunFam" id="3.30.460.30:FF:000001">
    <property type="entry name" value="Glutamyl-tRNA reductase"/>
    <property type="match status" value="1"/>
</dbReference>
<dbReference type="Gene3D" id="3.30.460.30">
    <property type="entry name" value="Glutamyl-tRNA reductase, N-terminal domain"/>
    <property type="match status" value="1"/>
</dbReference>
<dbReference type="Gene3D" id="3.40.50.720">
    <property type="entry name" value="NAD(P)-binding Rossmann-like Domain"/>
    <property type="match status" value="1"/>
</dbReference>
<dbReference type="HAMAP" id="MF_00087">
    <property type="entry name" value="Glu_tRNA_reductase"/>
    <property type="match status" value="1"/>
</dbReference>
<dbReference type="InterPro" id="IPR000343">
    <property type="entry name" value="4pyrrol_synth_GluRdtase"/>
</dbReference>
<dbReference type="InterPro" id="IPR015896">
    <property type="entry name" value="4pyrrol_synth_GluRdtase_dimer"/>
</dbReference>
<dbReference type="InterPro" id="IPR015895">
    <property type="entry name" value="4pyrrol_synth_GluRdtase_N"/>
</dbReference>
<dbReference type="InterPro" id="IPR018214">
    <property type="entry name" value="GluRdtase_CS"/>
</dbReference>
<dbReference type="InterPro" id="IPR036453">
    <property type="entry name" value="GluRdtase_dimer_dom_sf"/>
</dbReference>
<dbReference type="InterPro" id="IPR036343">
    <property type="entry name" value="GluRdtase_N_sf"/>
</dbReference>
<dbReference type="InterPro" id="IPR036291">
    <property type="entry name" value="NAD(P)-bd_dom_sf"/>
</dbReference>
<dbReference type="InterPro" id="IPR006151">
    <property type="entry name" value="Shikm_DH/Glu-tRNA_Rdtase"/>
</dbReference>
<dbReference type="NCBIfam" id="TIGR01035">
    <property type="entry name" value="hemA"/>
    <property type="match status" value="1"/>
</dbReference>
<dbReference type="PANTHER" id="PTHR43120">
    <property type="entry name" value="GLUTAMYL-TRNA REDUCTASE 1, CHLOROPLASTIC"/>
    <property type="match status" value="1"/>
</dbReference>
<dbReference type="PANTHER" id="PTHR43120:SF1">
    <property type="entry name" value="GLUTAMYL-TRNA REDUCTASE 1, CHLOROPLASTIC"/>
    <property type="match status" value="1"/>
</dbReference>
<dbReference type="Pfam" id="PF00745">
    <property type="entry name" value="GlutR_dimer"/>
    <property type="match status" value="1"/>
</dbReference>
<dbReference type="Pfam" id="PF05201">
    <property type="entry name" value="GlutR_N"/>
    <property type="match status" value="1"/>
</dbReference>
<dbReference type="Pfam" id="PF01488">
    <property type="entry name" value="Shikimate_DH"/>
    <property type="match status" value="1"/>
</dbReference>
<dbReference type="PIRSF" id="PIRSF000445">
    <property type="entry name" value="4pyrrol_synth_GluRdtase"/>
    <property type="match status" value="1"/>
</dbReference>
<dbReference type="SUPFAM" id="SSF69742">
    <property type="entry name" value="Glutamyl tRNA-reductase catalytic, N-terminal domain"/>
    <property type="match status" value="1"/>
</dbReference>
<dbReference type="SUPFAM" id="SSF69075">
    <property type="entry name" value="Glutamyl tRNA-reductase dimerization domain"/>
    <property type="match status" value="1"/>
</dbReference>
<dbReference type="SUPFAM" id="SSF51735">
    <property type="entry name" value="NAD(P)-binding Rossmann-fold domains"/>
    <property type="match status" value="1"/>
</dbReference>
<dbReference type="PROSITE" id="PS00747">
    <property type="entry name" value="GLUTR"/>
    <property type="match status" value="1"/>
</dbReference>
<keyword id="KW-0521">NADP</keyword>
<keyword id="KW-0560">Oxidoreductase</keyword>
<keyword id="KW-0627">Porphyrin biosynthesis</keyword>
<feature type="chain" id="PRO_1000093143" description="Glutamyl-tRNA reductase">
    <location>
        <begin position="1"/>
        <end position="449"/>
    </location>
</feature>
<feature type="active site" description="Nucleophile" evidence="1">
    <location>
        <position position="59"/>
    </location>
</feature>
<feature type="binding site" evidence="1">
    <location>
        <begin position="58"/>
        <end position="61"/>
    </location>
    <ligand>
        <name>substrate</name>
    </ligand>
</feature>
<feature type="binding site" evidence="1">
    <location>
        <position position="121"/>
    </location>
    <ligand>
        <name>substrate</name>
    </ligand>
</feature>
<feature type="binding site" evidence="1">
    <location>
        <begin position="126"/>
        <end position="128"/>
    </location>
    <ligand>
        <name>substrate</name>
    </ligand>
</feature>
<feature type="binding site" evidence="1">
    <location>
        <position position="132"/>
    </location>
    <ligand>
        <name>substrate</name>
    </ligand>
</feature>
<feature type="binding site" evidence="1">
    <location>
        <begin position="203"/>
        <end position="208"/>
    </location>
    <ligand>
        <name>NADP(+)</name>
        <dbReference type="ChEBI" id="CHEBI:58349"/>
    </ligand>
</feature>
<feature type="site" description="Important for activity" evidence="1">
    <location>
        <position position="111"/>
    </location>
</feature>
<gene>
    <name evidence="1" type="primary">hemA</name>
    <name type="ordered locus">HPP12_0239</name>
</gene>
<accession>B6JKH0</accession>
<protein>
    <recommendedName>
        <fullName evidence="1">Glutamyl-tRNA reductase</fullName>
        <shortName evidence="1">GluTR</shortName>
        <ecNumber evidence="1">1.2.1.70</ecNumber>
    </recommendedName>
</protein>
<organism>
    <name type="scientific">Helicobacter pylori (strain P12)</name>
    <dbReference type="NCBI Taxonomy" id="570508"/>
    <lineage>
        <taxon>Bacteria</taxon>
        <taxon>Pseudomonadati</taxon>
        <taxon>Campylobacterota</taxon>
        <taxon>Epsilonproteobacteria</taxon>
        <taxon>Campylobacterales</taxon>
        <taxon>Helicobacteraceae</taxon>
        <taxon>Helicobacter</taxon>
    </lineage>
</organism>
<name>HEM1_HELP2</name>